<gene>
    <name type="primary">cobK</name>
</gene>
<proteinExistence type="evidence at protein level"/>
<sequence>MAGSLFDTSAMEKPRILILGGTTEARELARRLAEDVRYDTAISLAGRTADPRPQPVKTRIGGFGGADGLAHFVHDENIALLVDATHPFAARISHNAADAAQRTGVALIALRRPEWVPLPGDRWTAVDSVVEAVSALGDRRRRVFLAIGRQEAFHFEVAPQHSYVIRSVDPVTPPLNLPDQEAILATGPFAEADEAALLRSRQIDVIVAKNSGGSATYGKIAAARRLGIEVIMVERRKPADVPTVGSCDEALNRIAHWLAPA</sequence>
<keyword id="KW-0169">Cobalamin biosynthesis</keyword>
<keyword id="KW-0903">Direct protein sequencing</keyword>
<keyword id="KW-0521">NADP</keyword>
<keyword id="KW-0560">Oxidoreductase</keyword>
<comment type="function">
    <text>Catalyzes the reduction of the macrocycle of precorrin-6X into precorrin-6Y.</text>
</comment>
<comment type="catalytic activity">
    <reaction>
        <text>precorrin-6B + NADP(+) = precorrin-6A + NADPH + 2 H(+)</text>
        <dbReference type="Rhea" id="RHEA:23408"/>
        <dbReference type="ChEBI" id="CHEBI:15378"/>
        <dbReference type="ChEBI" id="CHEBI:57783"/>
        <dbReference type="ChEBI" id="CHEBI:58349"/>
        <dbReference type="ChEBI" id="CHEBI:58532"/>
        <dbReference type="ChEBI" id="CHEBI:77872"/>
        <dbReference type="EC" id="1.3.1.54"/>
    </reaction>
</comment>
<comment type="pathway">
    <text>Cofactor biosynthesis; adenosylcobalamin biosynthesis; cob(II)yrinate a,c-diamide from precorrin-2 (aerobic route): step 6/10.</text>
</comment>
<comment type="similarity">
    <text evidence="1">Belongs to the precorrin-6x reductase family.</text>
</comment>
<comment type="caution">
    <text evidence="3">Was originally thought to originate from Pseudomonas denitrificans, but similarity searches show that the sequence is much closer to Sinorhizobium. The entry's taxonomy has been changed.</text>
</comment>
<comment type="sequence caution" evidence="4">
    <conflict type="miscellaneous discrepancy">
        <sequence resource="EMBL-CDS" id="AAA25799"/>
    </conflict>
    <text>Originally thought to be encoded on the other DNA strand, the correct open reading frame was subsequently identified.</text>
</comment>
<protein>
    <recommendedName>
        <fullName>Precorrin-6A reductase</fullName>
        <ecNumber>1.3.1.54</ecNumber>
    </recommendedName>
    <alternativeName>
        <fullName>Precorrin-6X reductase</fullName>
    </alternativeName>
</protein>
<organism>
    <name type="scientific">Sinorhizobium sp</name>
    <dbReference type="NCBI Taxonomy" id="42445"/>
    <lineage>
        <taxon>Bacteria</taxon>
        <taxon>Pseudomonadati</taxon>
        <taxon>Pseudomonadota</taxon>
        <taxon>Alphaproteobacteria</taxon>
        <taxon>Hyphomicrobiales</taxon>
        <taxon>Rhizobiaceae</taxon>
        <taxon>Sinorhizobium/Ensifer group</taxon>
        <taxon>Sinorhizobium</taxon>
    </lineage>
</organism>
<evidence type="ECO:0000255" key="1">
    <source>
        <dbReference type="PROSITE-ProRule" id="PRU00356"/>
    </source>
</evidence>
<evidence type="ECO:0000269" key="2">
    <source>
    </source>
</evidence>
<evidence type="ECO:0000305" key="3"/>
<evidence type="ECO:0000305" key="4">
    <source>
    </source>
</evidence>
<name>COBK_SINSX</name>
<feature type="initiator methionine" description="Removed" evidence="2">
    <location>
        <position position="1"/>
    </location>
</feature>
<feature type="chain" id="PRO_0000135920" description="Precorrin-6A reductase">
    <location>
        <begin position="2"/>
        <end position="261"/>
    </location>
</feature>
<reference key="1">
    <citation type="journal article" date="1990" name="J. Bacteriol.">
        <title>Genetic and sequence analysis of an 8.7-kilobase Pseudomonas denitrificans fragment carrying eight genes involved in transformation of precorrin-2 to cobyrinic acid.</title>
        <authorList>
            <person name="Crouzet J."/>
            <person name="Cameron B."/>
            <person name="Cauchois L."/>
            <person name="Rigault S."/>
            <person name="Rouyez M.-C."/>
            <person name="Blanche F."/>
            <person name="Thibaut D."/>
            <person name="Debussche L."/>
        </authorList>
    </citation>
    <scope>NUCLEOTIDE SEQUENCE [GENOMIC DNA]</scope>
    <source>
        <strain>SC510</strain>
    </source>
</reference>
<reference key="2">
    <citation type="journal article" date="1992" name="J. Bacteriol.">
        <title>Precorrin-6x reductase from Pseudomonas denitrificans: purification and characterization of the enzyme and identification of the structural gene.</title>
        <authorList>
            <person name="Blanche F."/>
            <person name="Thibaut D."/>
            <person name="Famechon A."/>
            <person name="Debussche L."/>
            <person name="Cameron B."/>
            <person name="Crouzet J."/>
        </authorList>
    </citation>
    <scope>PROTEIN SEQUENCE OF 2-7; 60-69; 112-122 AND 143-148</scope>
    <scope>SEQUENCE REVISION</scope>
    <scope>CHARACTERIZATION</scope>
</reference>
<dbReference type="EC" id="1.3.1.54"/>
<dbReference type="EMBL" id="M59301">
    <property type="protein sequence ID" value="AAA25799.1"/>
    <property type="status" value="ALT_SEQ"/>
    <property type="molecule type" value="Genomic_DNA"/>
</dbReference>
<dbReference type="PIR" id="F36145">
    <property type="entry name" value="F36145"/>
</dbReference>
<dbReference type="SMR" id="P21920"/>
<dbReference type="BioCyc" id="MetaCyc:MONOMER-113"/>
<dbReference type="UniPathway" id="UPA00148">
    <property type="reaction ID" value="UER00217"/>
</dbReference>
<dbReference type="GO" id="GO:0016994">
    <property type="term" value="F:precorrin-6A reductase activity"/>
    <property type="evidence" value="ECO:0007669"/>
    <property type="project" value="UniProtKB-EC"/>
</dbReference>
<dbReference type="GO" id="GO:0009236">
    <property type="term" value="P:cobalamin biosynthetic process"/>
    <property type="evidence" value="ECO:0007669"/>
    <property type="project" value="UniProtKB-UniPathway"/>
</dbReference>
<dbReference type="InterPro" id="IPR003723">
    <property type="entry name" value="Precorrin-6x_reduct"/>
</dbReference>
<dbReference type="NCBIfam" id="TIGR00715">
    <property type="entry name" value="precor6x_red"/>
    <property type="match status" value="1"/>
</dbReference>
<dbReference type="NCBIfam" id="NF005968">
    <property type="entry name" value="PRK08057.1-2"/>
    <property type="match status" value="1"/>
</dbReference>
<dbReference type="PANTHER" id="PTHR36925">
    <property type="entry name" value="COBALT-PRECORRIN-6A REDUCTASE"/>
    <property type="match status" value="1"/>
</dbReference>
<dbReference type="PANTHER" id="PTHR36925:SF1">
    <property type="entry name" value="COBALT-PRECORRIN-6A REDUCTASE"/>
    <property type="match status" value="1"/>
</dbReference>
<dbReference type="Pfam" id="PF02571">
    <property type="entry name" value="CbiJ"/>
    <property type="match status" value="1"/>
</dbReference>
<dbReference type="PROSITE" id="PS51014">
    <property type="entry name" value="COBK_CBIJ"/>
    <property type="match status" value="1"/>
</dbReference>
<accession>P21920</accession>